<comment type="function">
    <text evidence="1">RNaseP catalyzes the removal of the 5'-leader sequence from pre-tRNA to produce the mature 5'-terminus. It can also cleave other RNA substrates such as 4.5S RNA. The protein component plays an auxiliary but essential role in vivo by binding to the 5'-leader sequence and broadening the substrate specificity of the ribozyme.</text>
</comment>
<comment type="catalytic activity">
    <reaction evidence="1">
        <text>Endonucleolytic cleavage of RNA, removing 5'-extranucleotides from tRNA precursor.</text>
        <dbReference type="EC" id="3.1.26.5"/>
    </reaction>
</comment>
<comment type="subunit">
    <text evidence="1">Consists of a catalytic RNA component (M1 or rnpB) and a protein subunit.</text>
</comment>
<comment type="similarity">
    <text evidence="1">Belongs to the RnpA family.</text>
</comment>
<keyword id="KW-0255">Endonuclease</keyword>
<keyword id="KW-0378">Hydrolase</keyword>
<keyword id="KW-0540">Nuclease</keyword>
<keyword id="KW-1185">Reference proteome</keyword>
<keyword id="KW-0694">RNA-binding</keyword>
<keyword id="KW-0819">tRNA processing</keyword>
<reference key="1">
    <citation type="journal article" date="2001" name="Science">
        <title>The genome of the natural genetic engineer Agrobacterium tumefaciens C58.</title>
        <authorList>
            <person name="Wood D.W."/>
            <person name="Setubal J.C."/>
            <person name="Kaul R."/>
            <person name="Monks D.E."/>
            <person name="Kitajima J.P."/>
            <person name="Okura V.K."/>
            <person name="Zhou Y."/>
            <person name="Chen L."/>
            <person name="Wood G.E."/>
            <person name="Almeida N.F. Jr."/>
            <person name="Woo L."/>
            <person name="Chen Y."/>
            <person name="Paulsen I.T."/>
            <person name="Eisen J.A."/>
            <person name="Karp P.D."/>
            <person name="Bovee D. Sr."/>
            <person name="Chapman P."/>
            <person name="Clendenning J."/>
            <person name="Deatherage G."/>
            <person name="Gillet W."/>
            <person name="Grant C."/>
            <person name="Kutyavin T."/>
            <person name="Levy R."/>
            <person name="Li M.-J."/>
            <person name="McClelland E."/>
            <person name="Palmieri A."/>
            <person name="Raymond C."/>
            <person name="Rouse G."/>
            <person name="Saenphimmachak C."/>
            <person name="Wu Z."/>
            <person name="Romero P."/>
            <person name="Gordon D."/>
            <person name="Zhang S."/>
            <person name="Yoo H."/>
            <person name="Tao Y."/>
            <person name="Biddle P."/>
            <person name="Jung M."/>
            <person name="Krespan W."/>
            <person name="Perry M."/>
            <person name="Gordon-Kamm B."/>
            <person name="Liao L."/>
            <person name="Kim S."/>
            <person name="Hendrick C."/>
            <person name="Zhao Z.-Y."/>
            <person name="Dolan M."/>
            <person name="Chumley F."/>
            <person name="Tingey S.V."/>
            <person name="Tomb J.-F."/>
            <person name="Gordon M.P."/>
            <person name="Olson M.V."/>
            <person name="Nester E.W."/>
        </authorList>
    </citation>
    <scope>NUCLEOTIDE SEQUENCE [LARGE SCALE GENOMIC DNA]</scope>
    <source>
        <strain>C58 / ATCC 33970</strain>
    </source>
</reference>
<reference key="2">
    <citation type="journal article" date="2001" name="Science">
        <title>Genome sequence of the plant pathogen and biotechnology agent Agrobacterium tumefaciens C58.</title>
        <authorList>
            <person name="Goodner B."/>
            <person name="Hinkle G."/>
            <person name="Gattung S."/>
            <person name="Miller N."/>
            <person name="Blanchard M."/>
            <person name="Qurollo B."/>
            <person name="Goldman B.S."/>
            <person name="Cao Y."/>
            <person name="Askenazi M."/>
            <person name="Halling C."/>
            <person name="Mullin L."/>
            <person name="Houmiel K."/>
            <person name="Gordon J."/>
            <person name="Vaudin M."/>
            <person name="Iartchouk O."/>
            <person name="Epp A."/>
            <person name="Liu F."/>
            <person name="Wollam C."/>
            <person name="Allinger M."/>
            <person name="Doughty D."/>
            <person name="Scott C."/>
            <person name="Lappas C."/>
            <person name="Markelz B."/>
            <person name="Flanagan C."/>
            <person name="Crowell C."/>
            <person name="Gurson J."/>
            <person name="Lomo C."/>
            <person name="Sear C."/>
            <person name="Strub G."/>
            <person name="Cielo C."/>
            <person name="Slater S."/>
        </authorList>
    </citation>
    <scope>NUCLEOTIDE SEQUENCE [LARGE SCALE GENOMIC DNA]</scope>
    <source>
        <strain>C58 / ATCC 33970</strain>
    </source>
</reference>
<protein>
    <recommendedName>
        <fullName evidence="1">Ribonuclease P protein component</fullName>
        <shortName evidence="1">RNase P protein</shortName>
        <shortName evidence="1">RNaseP protein</shortName>
        <ecNumber evidence="1">3.1.26.5</ecNumber>
    </recommendedName>
    <alternativeName>
        <fullName evidence="1">Protein C5</fullName>
    </alternativeName>
</protein>
<evidence type="ECO:0000255" key="1">
    <source>
        <dbReference type="HAMAP-Rule" id="MF_00227"/>
    </source>
</evidence>
<gene>
    <name evidence="1" type="primary">rnpA</name>
    <name type="ordered locus">Atu0385</name>
    <name type="ORF">AGR_C_675</name>
</gene>
<feature type="chain" id="PRO_0000198414" description="Ribonuclease P protein component">
    <location>
        <begin position="1"/>
        <end position="127"/>
    </location>
</feature>
<proteinExistence type="inferred from homology"/>
<name>RNPA_AGRFC</name>
<dbReference type="EC" id="3.1.26.5" evidence="1"/>
<dbReference type="EMBL" id="AE007869">
    <property type="protein sequence ID" value="AAK86201.2"/>
    <property type="molecule type" value="Genomic_DNA"/>
</dbReference>
<dbReference type="PIR" id="AI2623">
    <property type="entry name" value="AI2623"/>
</dbReference>
<dbReference type="RefSeq" id="NP_353416.2">
    <property type="nucleotide sequence ID" value="NC_003062.2"/>
</dbReference>
<dbReference type="RefSeq" id="WP_010970859.1">
    <property type="nucleotide sequence ID" value="NC_003062.2"/>
</dbReference>
<dbReference type="SMR" id="Q8UIB2"/>
<dbReference type="STRING" id="176299.Atu0385"/>
<dbReference type="EnsemblBacteria" id="AAK86201">
    <property type="protein sequence ID" value="AAK86201"/>
    <property type="gene ID" value="Atu0385"/>
</dbReference>
<dbReference type="GeneID" id="1132423"/>
<dbReference type="KEGG" id="atu:Atu0385"/>
<dbReference type="PATRIC" id="fig|176299.10.peg.377"/>
<dbReference type="eggNOG" id="COG0594">
    <property type="taxonomic scope" value="Bacteria"/>
</dbReference>
<dbReference type="HOGENOM" id="CLU_117179_6_1_5"/>
<dbReference type="OrthoDB" id="9810867at2"/>
<dbReference type="PhylomeDB" id="Q8UIB2"/>
<dbReference type="BioCyc" id="AGRO:ATU0385-MONOMER"/>
<dbReference type="Proteomes" id="UP000000813">
    <property type="component" value="Chromosome circular"/>
</dbReference>
<dbReference type="GO" id="GO:0030677">
    <property type="term" value="C:ribonuclease P complex"/>
    <property type="evidence" value="ECO:0007669"/>
    <property type="project" value="TreeGrafter"/>
</dbReference>
<dbReference type="GO" id="GO:0042781">
    <property type="term" value="F:3'-tRNA processing endoribonuclease activity"/>
    <property type="evidence" value="ECO:0007669"/>
    <property type="project" value="TreeGrafter"/>
</dbReference>
<dbReference type="GO" id="GO:0004526">
    <property type="term" value="F:ribonuclease P activity"/>
    <property type="evidence" value="ECO:0007669"/>
    <property type="project" value="UniProtKB-UniRule"/>
</dbReference>
<dbReference type="GO" id="GO:0000049">
    <property type="term" value="F:tRNA binding"/>
    <property type="evidence" value="ECO:0007669"/>
    <property type="project" value="UniProtKB-UniRule"/>
</dbReference>
<dbReference type="GO" id="GO:0001682">
    <property type="term" value="P:tRNA 5'-leader removal"/>
    <property type="evidence" value="ECO:0007669"/>
    <property type="project" value="UniProtKB-UniRule"/>
</dbReference>
<dbReference type="Gene3D" id="3.30.230.10">
    <property type="match status" value="1"/>
</dbReference>
<dbReference type="HAMAP" id="MF_00227">
    <property type="entry name" value="RNase_P"/>
    <property type="match status" value="1"/>
</dbReference>
<dbReference type="InterPro" id="IPR020568">
    <property type="entry name" value="Ribosomal_Su5_D2-typ_SF"/>
</dbReference>
<dbReference type="InterPro" id="IPR014721">
    <property type="entry name" value="Ribsml_uS5_D2-typ_fold_subgr"/>
</dbReference>
<dbReference type="InterPro" id="IPR000100">
    <property type="entry name" value="RNase_P"/>
</dbReference>
<dbReference type="NCBIfam" id="TIGR00188">
    <property type="entry name" value="rnpA"/>
    <property type="match status" value="1"/>
</dbReference>
<dbReference type="PANTHER" id="PTHR33992">
    <property type="entry name" value="RIBONUCLEASE P PROTEIN COMPONENT"/>
    <property type="match status" value="1"/>
</dbReference>
<dbReference type="PANTHER" id="PTHR33992:SF1">
    <property type="entry name" value="RIBONUCLEASE P PROTEIN COMPONENT"/>
    <property type="match status" value="1"/>
</dbReference>
<dbReference type="Pfam" id="PF00825">
    <property type="entry name" value="Ribonuclease_P"/>
    <property type="match status" value="1"/>
</dbReference>
<dbReference type="SUPFAM" id="SSF54211">
    <property type="entry name" value="Ribosomal protein S5 domain 2-like"/>
    <property type="match status" value="1"/>
</dbReference>
<sequence>MSETKKQPGRLKNRSEFLAVQAGEKRRGSTFLVEVLDRRAPETEPRVGFTVTKRQGNAVERNRMRRRLKEAVRLSAGVAMKPGHDYVIVARRDVLDTAFPKLQSLLIERIEGTAKPKRSQETRSRKE</sequence>
<organism>
    <name type="scientific">Agrobacterium fabrum (strain C58 / ATCC 33970)</name>
    <name type="common">Agrobacterium tumefaciens (strain C58)</name>
    <dbReference type="NCBI Taxonomy" id="176299"/>
    <lineage>
        <taxon>Bacteria</taxon>
        <taxon>Pseudomonadati</taxon>
        <taxon>Pseudomonadota</taxon>
        <taxon>Alphaproteobacteria</taxon>
        <taxon>Hyphomicrobiales</taxon>
        <taxon>Rhizobiaceae</taxon>
        <taxon>Rhizobium/Agrobacterium group</taxon>
        <taxon>Agrobacterium</taxon>
        <taxon>Agrobacterium tumefaciens complex</taxon>
    </lineage>
</organism>
<accession>Q8UIB2</accession>
<accession>Q8U5M5</accession>